<feature type="chain" id="PRO_0000128351" description="T-complex protein 1 subunit epsilon">
    <location>
        <begin position="1"/>
        <end position="535"/>
    </location>
</feature>
<comment type="function">
    <text>Molecular chaperone; assists the folding of proteins upon ATP hydrolysis. Known to play a role, in vitro, in the folding of actin and tubulin.</text>
</comment>
<comment type="subunit">
    <text>Heterooligomeric complex of about 850 to 900 kDa that forms two stacked rings, 12 to 16 nm in diameter.</text>
</comment>
<comment type="subcellular location">
    <subcellularLocation>
        <location>Cytoplasm</location>
    </subcellularLocation>
</comment>
<comment type="similarity">
    <text evidence="1">Belongs to the TCP-1 chaperonin family.</text>
</comment>
<organism>
    <name type="scientific">Avena sativa</name>
    <name type="common">Oat</name>
    <dbReference type="NCBI Taxonomy" id="4498"/>
    <lineage>
        <taxon>Eukaryota</taxon>
        <taxon>Viridiplantae</taxon>
        <taxon>Streptophyta</taxon>
        <taxon>Embryophyta</taxon>
        <taxon>Tracheophyta</taxon>
        <taxon>Spermatophyta</taxon>
        <taxon>Magnoliopsida</taxon>
        <taxon>Liliopsida</taxon>
        <taxon>Poales</taxon>
        <taxon>Poaceae</taxon>
        <taxon>BOP clade</taxon>
        <taxon>Pooideae</taxon>
        <taxon>Poodae</taxon>
        <taxon>Poeae</taxon>
        <taxon>Poeae Chloroplast Group 1 (Aveneae type)</taxon>
        <taxon>Aveninae</taxon>
        <taxon>Avena</taxon>
    </lineage>
</organism>
<keyword id="KW-0067">ATP-binding</keyword>
<keyword id="KW-0143">Chaperone</keyword>
<keyword id="KW-0963">Cytoplasm</keyword>
<keyword id="KW-0547">Nucleotide-binding</keyword>
<reference key="1">
    <citation type="journal article" date="1993" name="FEBS Lett.">
        <title>Two Tcp-1-related but highly divergent gene families exist in oat encoding proteins of assumed chaperone function.</title>
        <authorList>
            <person name="Ehmann B."/>
            <person name="Krenz M."/>
            <person name="Mummert E."/>
            <person name="Schaefer E."/>
        </authorList>
    </citation>
    <scope>NUCLEOTIDE SEQUENCE [MRNA]</scope>
    <source>
        <strain>cv. Pewi</strain>
        <tissue>Coleoptile</tissue>
        <tissue>Mesocotyl</tissue>
    </source>
</reference>
<name>TCPE1_AVESA</name>
<protein>
    <recommendedName>
        <fullName>T-complex protein 1 subunit epsilon</fullName>
        <shortName>TCP-1-epsilon</shortName>
    </recommendedName>
    <alternativeName>
        <fullName>CCT-epsilon</fullName>
    </alternativeName>
    <alternativeName>
        <fullName>TCP-K19</fullName>
    </alternativeName>
</protein>
<dbReference type="EMBL" id="X75777">
    <property type="protein sequence ID" value="CAA53396.1"/>
    <property type="molecule type" value="mRNA"/>
</dbReference>
<dbReference type="PIR" id="S40461">
    <property type="entry name" value="S40461"/>
</dbReference>
<dbReference type="SMR" id="P40412"/>
<dbReference type="GO" id="GO:0005832">
    <property type="term" value="C:chaperonin-containing T-complex"/>
    <property type="evidence" value="ECO:0007669"/>
    <property type="project" value="UniProtKB-ARBA"/>
</dbReference>
<dbReference type="GO" id="GO:0005524">
    <property type="term" value="F:ATP binding"/>
    <property type="evidence" value="ECO:0007669"/>
    <property type="project" value="UniProtKB-KW"/>
</dbReference>
<dbReference type="GO" id="GO:0016887">
    <property type="term" value="F:ATP hydrolysis activity"/>
    <property type="evidence" value="ECO:0007669"/>
    <property type="project" value="InterPro"/>
</dbReference>
<dbReference type="GO" id="GO:0140662">
    <property type="term" value="F:ATP-dependent protein folding chaperone"/>
    <property type="evidence" value="ECO:0007669"/>
    <property type="project" value="InterPro"/>
</dbReference>
<dbReference type="GO" id="GO:0051082">
    <property type="term" value="F:unfolded protein binding"/>
    <property type="evidence" value="ECO:0007669"/>
    <property type="project" value="InterPro"/>
</dbReference>
<dbReference type="CDD" id="cd03339">
    <property type="entry name" value="TCP1_epsilon"/>
    <property type="match status" value="1"/>
</dbReference>
<dbReference type="FunFam" id="1.10.560.10:FF:000053">
    <property type="entry name" value="T-complex protein 1 subunit delta"/>
    <property type="match status" value="1"/>
</dbReference>
<dbReference type="FunFam" id="3.50.7.10:FF:000003">
    <property type="entry name" value="T-complex protein 1 subunit epsilon"/>
    <property type="match status" value="1"/>
</dbReference>
<dbReference type="FunFam" id="1.10.560.10:FF:000049">
    <property type="entry name" value="T-complex protein 1 subunitTheta, putative"/>
    <property type="match status" value="1"/>
</dbReference>
<dbReference type="Gene3D" id="3.50.7.10">
    <property type="entry name" value="GroEL"/>
    <property type="match status" value="1"/>
</dbReference>
<dbReference type="Gene3D" id="1.10.560.10">
    <property type="entry name" value="GroEL-like equatorial domain"/>
    <property type="match status" value="1"/>
</dbReference>
<dbReference type="Gene3D" id="3.30.260.10">
    <property type="entry name" value="TCP-1-like chaperonin intermediate domain"/>
    <property type="match status" value="1"/>
</dbReference>
<dbReference type="InterPro" id="IPR012718">
    <property type="entry name" value="Chap_CCT_epsi"/>
</dbReference>
<dbReference type="InterPro" id="IPR017998">
    <property type="entry name" value="Chaperone_TCP-1"/>
</dbReference>
<dbReference type="InterPro" id="IPR002194">
    <property type="entry name" value="Chaperonin_TCP-1_CS"/>
</dbReference>
<dbReference type="InterPro" id="IPR002423">
    <property type="entry name" value="Cpn60/GroEL/TCP-1"/>
</dbReference>
<dbReference type="InterPro" id="IPR027409">
    <property type="entry name" value="GroEL-like_apical_dom_sf"/>
</dbReference>
<dbReference type="InterPro" id="IPR027413">
    <property type="entry name" value="GROEL-like_equatorial_sf"/>
</dbReference>
<dbReference type="InterPro" id="IPR027410">
    <property type="entry name" value="TCP-1-like_intermed_sf"/>
</dbReference>
<dbReference type="InterPro" id="IPR053374">
    <property type="entry name" value="TCP-1_chaperonin"/>
</dbReference>
<dbReference type="InterPro" id="IPR054827">
    <property type="entry name" value="thermosome_alpha"/>
</dbReference>
<dbReference type="NCBIfam" id="TIGR02343">
    <property type="entry name" value="chap_CCT_epsi"/>
    <property type="match status" value="1"/>
</dbReference>
<dbReference type="NCBIfam" id="NF041082">
    <property type="entry name" value="thermosome_alpha"/>
    <property type="match status" value="1"/>
</dbReference>
<dbReference type="NCBIfam" id="NF041083">
    <property type="entry name" value="thermosome_beta"/>
    <property type="match status" value="1"/>
</dbReference>
<dbReference type="PANTHER" id="PTHR11353">
    <property type="entry name" value="CHAPERONIN"/>
    <property type="match status" value="1"/>
</dbReference>
<dbReference type="Pfam" id="PF00118">
    <property type="entry name" value="Cpn60_TCP1"/>
    <property type="match status" value="1"/>
</dbReference>
<dbReference type="PRINTS" id="PR00304">
    <property type="entry name" value="TCOMPLEXTCP1"/>
</dbReference>
<dbReference type="SUPFAM" id="SSF52029">
    <property type="entry name" value="GroEL apical domain-like"/>
    <property type="match status" value="1"/>
</dbReference>
<dbReference type="SUPFAM" id="SSF48592">
    <property type="entry name" value="GroEL equatorial domain-like"/>
    <property type="match status" value="1"/>
</dbReference>
<dbReference type="SUPFAM" id="SSF54849">
    <property type="entry name" value="GroEL-intermediate domain like"/>
    <property type="match status" value="1"/>
</dbReference>
<dbReference type="PROSITE" id="PS00750">
    <property type="entry name" value="TCP1_1"/>
    <property type="match status" value="1"/>
</dbReference>
<dbReference type="PROSITE" id="PS00751">
    <property type="entry name" value="TCP1_2"/>
    <property type="match status" value="1"/>
</dbReference>
<dbReference type="PROSITE" id="PS00995">
    <property type="entry name" value="TCP1_3"/>
    <property type="match status" value="1"/>
</dbReference>
<proteinExistence type="evidence at transcript level"/>
<evidence type="ECO:0000305" key="1"/>
<sequence>MALAFDEYGRPFIILREQEKKSRLQGLDAHKANIAAAKAIARILRTSLGPKGMDKMLQSPDGDVTITNDGATILELMDVDNQIAKLLVELSRSQDYDIGDGTTGVVVMAGALLEQAEKLLERGIHPIRVAEGYEMASRIAVDHLESISTKYEFSATDIEPLVQTCMTTLSSKIVSRCKRALAEISVKAVLAVADLERKDVNLDLIKVEGKVGGKLEDTELVEGIIVDKDMSHPQMPKRIYDAHIAILTCPFEPPKPKTKHKVDIDTVEKFQTLRGQEQKYFDEMVQKCKDVGATLVICQWGFDDEANHLLMQRELPAVRWVGGVELELIAIATGGRIVPRFQELSTEKLGKAGLVREKSFGTTKDRMLYIEKCANSKAVTIFIRGGNKMMIEETKRSIHDALCVARNLIINNSIVYGGGSAEISCSIAVEAAADRHPGVEQYAIRAFADALDAIPLALAENSGLPPIDTLTVVKSQHVKENNSRCGIDCNDVGTNDMKEQNVFETLIGKQQQILLATQVVKMILKIDDVITPSEY</sequence>
<accession>P40412</accession>